<accession>C3K2V2</accession>
<comment type="function">
    <text evidence="1">One of the primary rRNA binding proteins, it binds directly to 16S rRNA where it nucleates assembly of the body of the 30S subunit.</text>
</comment>
<comment type="function">
    <text evidence="1">With S5 and S12 plays an important role in translational accuracy.</text>
</comment>
<comment type="subunit">
    <text evidence="1">Part of the 30S ribosomal subunit. Contacts protein S5. The interaction surface between S4 and S5 is involved in control of translational fidelity.</text>
</comment>
<comment type="similarity">
    <text evidence="1">Belongs to the universal ribosomal protein uS4 family.</text>
</comment>
<proteinExistence type="inferred from homology"/>
<dbReference type="EMBL" id="AM181176">
    <property type="protein sequence ID" value="CAY52725.1"/>
    <property type="molecule type" value="Genomic_DNA"/>
</dbReference>
<dbReference type="RefSeq" id="WP_003176404.1">
    <property type="nucleotide sequence ID" value="NC_012660.1"/>
</dbReference>
<dbReference type="SMR" id="C3K2V2"/>
<dbReference type="STRING" id="294.SRM1_05156"/>
<dbReference type="GeneID" id="98113683"/>
<dbReference type="eggNOG" id="COG0522">
    <property type="taxonomic scope" value="Bacteria"/>
</dbReference>
<dbReference type="HOGENOM" id="CLU_092403_0_2_6"/>
<dbReference type="OrthoDB" id="9803672at2"/>
<dbReference type="GO" id="GO:0015935">
    <property type="term" value="C:small ribosomal subunit"/>
    <property type="evidence" value="ECO:0007669"/>
    <property type="project" value="InterPro"/>
</dbReference>
<dbReference type="GO" id="GO:0019843">
    <property type="term" value="F:rRNA binding"/>
    <property type="evidence" value="ECO:0007669"/>
    <property type="project" value="UniProtKB-UniRule"/>
</dbReference>
<dbReference type="GO" id="GO:0003735">
    <property type="term" value="F:structural constituent of ribosome"/>
    <property type="evidence" value="ECO:0007669"/>
    <property type="project" value="InterPro"/>
</dbReference>
<dbReference type="GO" id="GO:0042274">
    <property type="term" value="P:ribosomal small subunit biogenesis"/>
    <property type="evidence" value="ECO:0007669"/>
    <property type="project" value="TreeGrafter"/>
</dbReference>
<dbReference type="GO" id="GO:0006412">
    <property type="term" value="P:translation"/>
    <property type="evidence" value="ECO:0007669"/>
    <property type="project" value="UniProtKB-UniRule"/>
</dbReference>
<dbReference type="CDD" id="cd00165">
    <property type="entry name" value="S4"/>
    <property type="match status" value="1"/>
</dbReference>
<dbReference type="FunFam" id="1.10.1050.10:FF:000001">
    <property type="entry name" value="30S ribosomal protein S4"/>
    <property type="match status" value="1"/>
</dbReference>
<dbReference type="FunFam" id="3.10.290.10:FF:000001">
    <property type="entry name" value="30S ribosomal protein S4"/>
    <property type="match status" value="1"/>
</dbReference>
<dbReference type="Gene3D" id="1.10.1050.10">
    <property type="entry name" value="Ribosomal Protein S4 Delta 41, Chain A, domain 1"/>
    <property type="match status" value="1"/>
</dbReference>
<dbReference type="Gene3D" id="3.10.290.10">
    <property type="entry name" value="RNA-binding S4 domain"/>
    <property type="match status" value="1"/>
</dbReference>
<dbReference type="HAMAP" id="MF_01306_B">
    <property type="entry name" value="Ribosomal_uS4_B"/>
    <property type="match status" value="1"/>
</dbReference>
<dbReference type="InterPro" id="IPR022801">
    <property type="entry name" value="Ribosomal_uS4"/>
</dbReference>
<dbReference type="InterPro" id="IPR005709">
    <property type="entry name" value="Ribosomal_uS4_bac-type"/>
</dbReference>
<dbReference type="InterPro" id="IPR018079">
    <property type="entry name" value="Ribosomal_uS4_CS"/>
</dbReference>
<dbReference type="InterPro" id="IPR001912">
    <property type="entry name" value="Ribosomal_uS4_N"/>
</dbReference>
<dbReference type="InterPro" id="IPR002942">
    <property type="entry name" value="S4_RNA-bd"/>
</dbReference>
<dbReference type="InterPro" id="IPR036986">
    <property type="entry name" value="S4_RNA-bd_sf"/>
</dbReference>
<dbReference type="NCBIfam" id="NF003717">
    <property type="entry name" value="PRK05327.1"/>
    <property type="match status" value="1"/>
</dbReference>
<dbReference type="NCBIfam" id="TIGR01017">
    <property type="entry name" value="rpsD_bact"/>
    <property type="match status" value="1"/>
</dbReference>
<dbReference type="PANTHER" id="PTHR11831">
    <property type="entry name" value="30S 40S RIBOSOMAL PROTEIN"/>
    <property type="match status" value="1"/>
</dbReference>
<dbReference type="PANTHER" id="PTHR11831:SF4">
    <property type="entry name" value="SMALL RIBOSOMAL SUBUNIT PROTEIN US4M"/>
    <property type="match status" value="1"/>
</dbReference>
<dbReference type="Pfam" id="PF00163">
    <property type="entry name" value="Ribosomal_S4"/>
    <property type="match status" value="1"/>
</dbReference>
<dbReference type="Pfam" id="PF01479">
    <property type="entry name" value="S4"/>
    <property type="match status" value="1"/>
</dbReference>
<dbReference type="SMART" id="SM01390">
    <property type="entry name" value="Ribosomal_S4"/>
    <property type="match status" value="1"/>
</dbReference>
<dbReference type="SMART" id="SM00363">
    <property type="entry name" value="S4"/>
    <property type="match status" value="1"/>
</dbReference>
<dbReference type="SUPFAM" id="SSF55174">
    <property type="entry name" value="Alpha-L RNA-binding motif"/>
    <property type="match status" value="1"/>
</dbReference>
<dbReference type="PROSITE" id="PS00632">
    <property type="entry name" value="RIBOSOMAL_S4"/>
    <property type="match status" value="1"/>
</dbReference>
<dbReference type="PROSITE" id="PS50889">
    <property type="entry name" value="S4"/>
    <property type="match status" value="1"/>
</dbReference>
<evidence type="ECO:0000255" key="1">
    <source>
        <dbReference type="HAMAP-Rule" id="MF_01306"/>
    </source>
</evidence>
<evidence type="ECO:0000305" key="2"/>
<gene>
    <name evidence="1" type="primary">rpsD</name>
    <name type="ordered locus">PFLU_5503</name>
</gene>
<name>RS4_PSEFS</name>
<keyword id="KW-0687">Ribonucleoprotein</keyword>
<keyword id="KW-0689">Ribosomal protein</keyword>
<keyword id="KW-0694">RNA-binding</keyword>
<keyword id="KW-0699">rRNA-binding</keyword>
<protein>
    <recommendedName>
        <fullName evidence="1">Small ribosomal subunit protein uS4</fullName>
    </recommendedName>
    <alternativeName>
        <fullName evidence="2">30S ribosomal protein S4</fullName>
    </alternativeName>
</protein>
<organism>
    <name type="scientific">Pseudomonas fluorescens (strain SBW25)</name>
    <dbReference type="NCBI Taxonomy" id="216595"/>
    <lineage>
        <taxon>Bacteria</taxon>
        <taxon>Pseudomonadati</taxon>
        <taxon>Pseudomonadota</taxon>
        <taxon>Gammaproteobacteria</taxon>
        <taxon>Pseudomonadales</taxon>
        <taxon>Pseudomonadaceae</taxon>
        <taxon>Pseudomonas</taxon>
    </lineage>
</organism>
<sequence length="206" mass="23076">MARYIGPKCKLARREGTDLFLKSGVRAIESKCNIEAAPGIHGQRRGRQSDYGTQLREKQKVRRIYGVLERQFSGYYKEAAGKKGATGENLLQLLECRLDNVVYRMGFGSTRAESRQLVSHKSISVNGQTVNVPSYQVRAGDVVAVREKAKNQLRIVQALDLCAQRGRVEWVEVDTEKKSGVFKNVPARSDLSADINESLIVELYSK</sequence>
<reference key="1">
    <citation type="journal article" date="2009" name="Genome Biol.">
        <title>Genomic and genetic analyses of diversity and plant interactions of Pseudomonas fluorescens.</title>
        <authorList>
            <person name="Silby M.W."/>
            <person name="Cerdeno-Tarraga A.M."/>
            <person name="Vernikos G.S."/>
            <person name="Giddens S.R."/>
            <person name="Jackson R.W."/>
            <person name="Preston G.M."/>
            <person name="Zhang X.-X."/>
            <person name="Moon C.D."/>
            <person name="Gehrig S.M."/>
            <person name="Godfrey S.A.C."/>
            <person name="Knight C.G."/>
            <person name="Malone J.G."/>
            <person name="Robinson Z."/>
            <person name="Spiers A.J."/>
            <person name="Harris S."/>
            <person name="Challis G.L."/>
            <person name="Yaxley A.M."/>
            <person name="Harris D."/>
            <person name="Seeger K."/>
            <person name="Murphy L."/>
            <person name="Rutter S."/>
            <person name="Squares R."/>
            <person name="Quail M.A."/>
            <person name="Saunders E."/>
            <person name="Mavromatis K."/>
            <person name="Brettin T.S."/>
            <person name="Bentley S.D."/>
            <person name="Hothersall J."/>
            <person name="Stephens E."/>
            <person name="Thomas C.M."/>
            <person name="Parkhill J."/>
            <person name="Levy S.B."/>
            <person name="Rainey P.B."/>
            <person name="Thomson N.R."/>
        </authorList>
    </citation>
    <scope>NUCLEOTIDE SEQUENCE [LARGE SCALE GENOMIC DNA]</scope>
    <source>
        <strain>SBW25</strain>
    </source>
</reference>
<feature type="chain" id="PRO_1000214298" description="Small ribosomal subunit protein uS4">
    <location>
        <begin position="1"/>
        <end position="206"/>
    </location>
</feature>
<feature type="domain" description="S4 RNA-binding" evidence="1">
    <location>
        <begin position="96"/>
        <end position="156"/>
    </location>
</feature>